<comment type="function">
    <text evidence="4">Regulator of phospholipase D (SPO14) which is required for SPO14 catalytic activity in mitotic cells. Essential to buffer the toxic effects of C16:0 platelet activating factor.</text>
</comment>
<comment type="subunit">
    <text evidence="4">Interacts with SPO14.</text>
</comment>
<comment type="subcellular location">
    <subcellularLocation>
        <location evidence="5">Membrane</location>
        <topology evidence="5">Multi-pass membrane protein</topology>
    </subcellularLocation>
</comment>
<comment type="induction">
    <text evidence="3">During S phase of cell cycle.</text>
</comment>
<reference key="1">
    <citation type="journal article" date="1996" name="Yeast">
        <title>Analysis of a 26,756 bp segment from the left arm of yeast chromosome IV.</title>
        <authorList>
            <person name="Woelfl S."/>
            <person name="Haneman V."/>
            <person name="Saluz H.P."/>
        </authorList>
    </citation>
    <scope>NUCLEOTIDE SEQUENCE [GENOMIC DNA]</scope>
    <source>
        <strain>ATCC 96604 / S288c / FY1679</strain>
    </source>
</reference>
<reference key="2">
    <citation type="journal article" date="1997" name="Nature">
        <title>The nucleotide sequence of Saccharomyces cerevisiae chromosome IV.</title>
        <authorList>
            <person name="Jacq C."/>
            <person name="Alt-Moerbe J."/>
            <person name="Andre B."/>
            <person name="Arnold W."/>
            <person name="Bahr A."/>
            <person name="Ballesta J.P.G."/>
            <person name="Bargues M."/>
            <person name="Baron L."/>
            <person name="Becker A."/>
            <person name="Biteau N."/>
            <person name="Bloecker H."/>
            <person name="Blugeon C."/>
            <person name="Boskovic J."/>
            <person name="Brandt P."/>
            <person name="Brueckner M."/>
            <person name="Buitrago M.J."/>
            <person name="Coster F."/>
            <person name="Delaveau T."/>
            <person name="del Rey F."/>
            <person name="Dujon B."/>
            <person name="Eide L.G."/>
            <person name="Garcia-Cantalejo J.M."/>
            <person name="Goffeau A."/>
            <person name="Gomez-Peris A."/>
            <person name="Granotier C."/>
            <person name="Hanemann V."/>
            <person name="Hankeln T."/>
            <person name="Hoheisel J.D."/>
            <person name="Jaeger W."/>
            <person name="Jimenez A."/>
            <person name="Jonniaux J.-L."/>
            <person name="Kraemer C."/>
            <person name="Kuester H."/>
            <person name="Laamanen P."/>
            <person name="Legros Y."/>
            <person name="Louis E.J."/>
            <person name="Moeller-Rieker S."/>
            <person name="Monnet A."/>
            <person name="Moro M."/>
            <person name="Mueller-Auer S."/>
            <person name="Nussbaumer B."/>
            <person name="Paricio N."/>
            <person name="Paulin L."/>
            <person name="Perea J."/>
            <person name="Perez-Alonso M."/>
            <person name="Perez-Ortin J.E."/>
            <person name="Pohl T.M."/>
            <person name="Prydz H."/>
            <person name="Purnelle B."/>
            <person name="Rasmussen S.W."/>
            <person name="Remacha M.A."/>
            <person name="Revuelta J.L."/>
            <person name="Rieger M."/>
            <person name="Salom D."/>
            <person name="Saluz H.P."/>
            <person name="Saiz J.E."/>
            <person name="Saren A.-M."/>
            <person name="Schaefer M."/>
            <person name="Scharfe M."/>
            <person name="Schmidt E.R."/>
            <person name="Schneider C."/>
            <person name="Scholler P."/>
            <person name="Schwarz S."/>
            <person name="Soler-Mira A."/>
            <person name="Urrestarazu L.A."/>
            <person name="Verhasselt P."/>
            <person name="Vissers S."/>
            <person name="Voet M."/>
            <person name="Volckaert G."/>
            <person name="Wagner G."/>
            <person name="Wambutt R."/>
            <person name="Wedler E."/>
            <person name="Wedler H."/>
            <person name="Woelfl S."/>
            <person name="Harris D.E."/>
            <person name="Bowman S."/>
            <person name="Brown D."/>
            <person name="Churcher C.M."/>
            <person name="Connor R."/>
            <person name="Dedman K."/>
            <person name="Gentles S."/>
            <person name="Hamlin N."/>
            <person name="Hunt S."/>
            <person name="Jones L."/>
            <person name="McDonald S."/>
            <person name="Murphy L.D."/>
            <person name="Niblett D."/>
            <person name="Odell C."/>
            <person name="Oliver K."/>
            <person name="Rajandream M.A."/>
            <person name="Richards C."/>
            <person name="Shore L."/>
            <person name="Walsh S.V."/>
            <person name="Barrell B.G."/>
            <person name="Dietrich F.S."/>
            <person name="Mulligan J.T."/>
            <person name="Allen E."/>
            <person name="Araujo R."/>
            <person name="Aviles E."/>
            <person name="Berno A."/>
            <person name="Carpenter J."/>
            <person name="Chen E."/>
            <person name="Cherry J.M."/>
            <person name="Chung E."/>
            <person name="Duncan M."/>
            <person name="Hunicke-Smith S."/>
            <person name="Hyman R.W."/>
            <person name="Komp C."/>
            <person name="Lashkari D."/>
            <person name="Lew H."/>
            <person name="Lin D."/>
            <person name="Mosedale D."/>
            <person name="Nakahara K."/>
            <person name="Namath A."/>
            <person name="Oefner P."/>
            <person name="Oh C."/>
            <person name="Petel F.X."/>
            <person name="Roberts D."/>
            <person name="Schramm S."/>
            <person name="Schroeder M."/>
            <person name="Shogren T."/>
            <person name="Shroff N."/>
            <person name="Winant A."/>
            <person name="Yelton M.A."/>
            <person name="Botstein D."/>
            <person name="Davis R.W."/>
            <person name="Johnston M."/>
            <person name="Andrews S."/>
            <person name="Brinkman R."/>
            <person name="Cooper J."/>
            <person name="Ding H."/>
            <person name="Du Z."/>
            <person name="Favello A."/>
            <person name="Fulton L."/>
            <person name="Gattung S."/>
            <person name="Greco T."/>
            <person name="Hallsworth K."/>
            <person name="Hawkins J."/>
            <person name="Hillier L.W."/>
            <person name="Jier M."/>
            <person name="Johnson D."/>
            <person name="Johnston L."/>
            <person name="Kirsten J."/>
            <person name="Kucaba T."/>
            <person name="Langston Y."/>
            <person name="Latreille P."/>
            <person name="Le T."/>
            <person name="Mardis E."/>
            <person name="Menezes S."/>
            <person name="Miller N."/>
            <person name="Nhan M."/>
            <person name="Pauley A."/>
            <person name="Peluso D."/>
            <person name="Rifkin L."/>
            <person name="Riles L."/>
            <person name="Taich A."/>
            <person name="Trevaskis E."/>
            <person name="Vignati D."/>
            <person name="Wilcox L."/>
            <person name="Wohldman P."/>
            <person name="Vaudin M."/>
            <person name="Wilson R."/>
            <person name="Waterston R."/>
            <person name="Albermann K."/>
            <person name="Hani J."/>
            <person name="Heumann K."/>
            <person name="Kleine K."/>
            <person name="Mewes H.-W."/>
            <person name="Zollner A."/>
            <person name="Zaccaria P."/>
        </authorList>
    </citation>
    <scope>NUCLEOTIDE SEQUENCE [LARGE SCALE GENOMIC DNA]</scope>
    <source>
        <strain>ATCC 204508 / S288c</strain>
    </source>
</reference>
<reference key="3">
    <citation type="journal article" date="2014" name="G3 (Bethesda)">
        <title>The reference genome sequence of Saccharomyces cerevisiae: Then and now.</title>
        <authorList>
            <person name="Engel S.R."/>
            <person name="Dietrich F.S."/>
            <person name="Fisk D.G."/>
            <person name="Binkley G."/>
            <person name="Balakrishnan R."/>
            <person name="Costanzo M.C."/>
            <person name="Dwight S.S."/>
            <person name="Hitz B.C."/>
            <person name="Karra K."/>
            <person name="Nash R.S."/>
            <person name="Weng S."/>
            <person name="Wong E.D."/>
            <person name="Lloyd P."/>
            <person name="Skrzypek M.S."/>
            <person name="Miyasato S.R."/>
            <person name="Simison M."/>
            <person name="Cherry J.M."/>
        </authorList>
    </citation>
    <scope>GENOME REANNOTATION</scope>
    <source>
        <strain>ATCC 204508 / S288c</strain>
    </source>
</reference>
<reference key="4">
    <citation type="journal article" date="2005" name="Yeast">
        <title>New weakly expressed cell cycle-regulated genes in yeast.</title>
        <authorList>
            <person name="de Lichtenberg U."/>
            <person name="Wernersson R."/>
            <person name="Jensen T.S."/>
            <person name="Nielsen H.B."/>
            <person name="Fausboell A."/>
            <person name="Schmidt P."/>
            <person name="Hansen F.B."/>
            <person name="Knudsen S."/>
            <person name="Brunak S."/>
        </authorList>
    </citation>
    <scope>INDUCTION</scope>
</reference>
<reference key="5">
    <citation type="journal article" date="2006" name="Proc. Natl. Acad. Sci. U.S.A.">
        <title>A global topology map of the Saccharomyces cerevisiae membrane proteome.</title>
        <authorList>
            <person name="Kim H."/>
            <person name="Melen K."/>
            <person name="Oesterberg M."/>
            <person name="von Heijne G."/>
        </authorList>
    </citation>
    <scope>TOPOLOGY [LARGE SCALE ANALYSIS]</scope>
    <source>
        <strain>ATCC 208353 / W303-1A</strain>
    </source>
</reference>
<reference key="6">
    <citation type="journal article" date="2007" name="J. Proteome Res.">
        <title>Large-scale phosphorylation analysis of alpha-factor-arrested Saccharomyces cerevisiae.</title>
        <authorList>
            <person name="Li X."/>
            <person name="Gerber S.A."/>
            <person name="Rudner A.D."/>
            <person name="Beausoleil S.A."/>
            <person name="Haas W."/>
            <person name="Villen J."/>
            <person name="Elias J.E."/>
            <person name="Gygi S.P."/>
        </authorList>
    </citation>
    <scope>PHOSPHORYLATION [LARGE SCALE ANALYSIS] AT SER-45</scope>
    <scope>IDENTIFICATION BY MASS SPECTROMETRY [LARGE SCALE ANALYSIS]</scope>
    <source>
        <strain>ADR376</strain>
    </source>
</reference>
<reference key="7">
    <citation type="journal article" date="2008" name="Mol. Cell. Proteomics">
        <title>A multidimensional chromatography technology for in-depth phosphoproteome analysis.</title>
        <authorList>
            <person name="Albuquerque C.P."/>
            <person name="Smolka M.B."/>
            <person name="Payne S.H."/>
            <person name="Bafna V."/>
            <person name="Eng J."/>
            <person name="Zhou H."/>
        </authorList>
    </citation>
    <scope>PHOSPHORYLATION [LARGE SCALE ANALYSIS] AT SER-167</scope>
    <scope>IDENTIFICATION BY MASS SPECTROMETRY [LARGE SCALE ANALYSIS]</scope>
</reference>
<reference key="8">
    <citation type="journal article" date="2009" name="Science">
        <title>Global analysis of Cdk1 substrate phosphorylation sites provides insights into evolution.</title>
        <authorList>
            <person name="Holt L.J."/>
            <person name="Tuch B.B."/>
            <person name="Villen J."/>
            <person name="Johnson A.D."/>
            <person name="Gygi S.P."/>
            <person name="Morgan D.O."/>
        </authorList>
    </citation>
    <scope>PHOSPHORYLATION [LARGE SCALE ANALYSIS] AT SER-45 AND SER-167</scope>
    <scope>IDENTIFICATION BY MASS SPECTROMETRY [LARGE SCALE ANALYSIS]</scope>
</reference>
<reference key="9">
    <citation type="journal article" date="2011" name="PLoS Genet.">
        <title>Srf1 is a novel regulator of phospholipase D activity and is essential to buffer the toxic effects of C16:0 platelet activating factor.</title>
        <authorList>
            <person name="Kennedy M.A."/>
            <person name="Kabbani N."/>
            <person name="Lambert J.P."/>
            <person name="Swayne L.A."/>
            <person name="Ahmed F."/>
            <person name="Figeys D."/>
            <person name="Bennett S.A."/>
            <person name="Bryan J."/>
            <person name="Baetz K."/>
        </authorList>
    </citation>
    <scope>FUNCTION</scope>
    <scope>INTERACTION WITH SPO14</scope>
</reference>
<feature type="chain" id="PRO_0000240873" description="Regulator of phospholipase D SRF1">
    <location>
        <begin position="1"/>
        <end position="437"/>
    </location>
</feature>
<feature type="topological domain" description="Cytoplasmic" evidence="1">
    <location>
        <begin position="1"/>
        <end position="267"/>
    </location>
</feature>
<feature type="transmembrane region" description="Helical" evidence="1">
    <location>
        <begin position="268"/>
        <end position="288"/>
    </location>
</feature>
<feature type="topological domain" description="Extracellular" evidence="1">
    <location>
        <begin position="289"/>
        <end position="308"/>
    </location>
</feature>
<feature type="transmembrane region" description="Helical" evidence="1">
    <location>
        <begin position="309"/>
        <end position="329"/>
    </location>
</feature>
<feature type="topological domain" description="Cytoplasmic" evidence="1">
    <location>
        <begin position="330"/>
        <end position="348"/>
    </location>
</feature>
<feature type="transmembrane region" description="Helical" evidence="1">
    <location>
        <begin position="349"/>
        <end position="369"/>
    </location>
</feature>
<feature type="topological domain" description="Extracellular" evidence="1">
    <location>
        <begin position="370"/>
        <end position="403"/>
    </location>
</feature>
<feature type="transmembrane region" description="Helical" evidence="1">
    <location>
        <begin position="404"/>
        <end position="424"/>
    </location>
</feature>
<feature type="topological domain" description="Cytoplasmic" evidence="1">
    <location>
        <begin position="425"/>
        <end position="437"/>
    </location>
</feature>
<feature type="region of interest" description="Disordered" evidence="2">
    <location>
        <begin position="1"/>
        <end position="24"/>
    </location>
</feature>
<feature type="modified residue" description="Phosphoserine" evidence="6 8">
    <location>
        <position position="45"/>
    </location>
</feature>
<feature type="modified residue" description="Phosphoserine" evidence="7 8">
    <location>
        <position position="167"/>
    </location>
</feature>
<feature type="glycosylation site" description="N-linked (GlcNAc...) asparagine" evidence="1">
    <location>
        <position position="297"/>
    </location>
</feature>
<feature type="glycosylation site" description="N-linked (GlcNAc...) asparagine" evidence="1">
    <location>
        <position position="385"/>
    </location>
</feature>
<name>SRF1_YEAST</name>
<gene>
    <name type="primary">SRF1</name>
    <name type="ordered locus">YDL133W</name>
    <name type="ORF">D2185</name>
</gene>
<dbReference type="EMBL" id="X96876">
    <property type="protein sequence ID" value="CAA65627.1"/>
    <property type="molecule type" value="Genomic_DNA"/>
</dbReference>
<dbReference type="EMBL" id="Z74180">
    <property type="protein sequence ID" value="CAA98703.1"/>
    <property type="molecule type" value="Genomic_DNA"/>
</dbReference>
<dbReference type="EMBL" id="Z74181">
    <property type="protein sequence ID" value="CAA98704.1"/>
    <property type="molecule type" value="Genomic_DNA"/>
</dbReference>
<dbReference type="EMBL" id="BK006938">
    <property type="protein sequence ID" value="DAA11726.1"/>
    <property type="molecule type" value="Genomic_DNA"/>
</dbReference>
<dbReference type="PIR" id="S67679">
    <property type="entry name" value="S67679"/>
</dbReference>
<dbReference type="RefSeq" id="NP_010149.1">
    <property type="nucleotide sequence ID" value="NM_001180192.1"/>
</dbReference>
<dbReference type="BioGRID" id="31929">
    <property type="interactions" value="162"/>
</dbReference>
<dbReference type="DIP" id="DIP-1802N"/>
<dbReference type="FunCoup" id="Q12516">
    <property type="interactions" value="36"/>
</dbReference>
<dbReference type="IntAct" id="Q12516">
    <property type="interactions" value="5"/>
</dbReference>
<dbReference type="MINT" id="Q12516"/>
<dbReference type="STRING" id="4932.YDL133W"/>
<dbReference type="GlyCosmos" id="Q12516">
    <property type="glycosylation" value="2 sites, No reported glycans"/>
</dbReference>
<dbReference type="GlyGen" id="Q12516">
    <property type="glycosylation" value="5 sites, 1 O-linked glycan (3 sites)"/>
</dbReference>
<dbReference type="iPTMnet" id="Q12516"/>
<dbReference type="PaxDb" id="4932-YDL133W"/>
<dbReference type="PeptideAtlas" id="Q12516"/>
<dbReference type="EnsemblFungi" id="YDL133W_mRNA">
    <property type="protein sequence ID" value="YDL133W"/>
    <property type="gene ID" value="YDL133W"/>
</dbReference>
<dbReference type="GeneID" id="851423"/>
<dbReference type="KEGG" id="sce:YDL133W"/>
<dbReference type="AGR" id="SGD:S000002291"/>
<dbReference type="SGD" id="S000002291">
    <property type="gene designation" value="SRF1"/>
</dbReference>
<dbReference type="VEuPathDB" id="FungiDB:YDL133W"/>
<dbReference type="eggNOG" id="ENOG502QPXG">
    <property type="taxonomic scope" value="Eukaryota"/>
</dbReference>
<dbReference type="HOGENOM" id="CLU_027163_1_1_1"/>
<dbReference type="InParanoid" id="Q12516"/>
<dbReference type="OMA" id="TRFDKEW"/>
<dbReference type="OrthoDB" id="2589563at2759"/>
<dbReference type="BioCyc" id="YEAST:G3O-29531-MONOMER"/>
<dbReference type="BioGRID-ORCS" id="851423">
    <property type="hits" value="5 hits in 10 CRISPR screens"/>
</dbReference>
<dbReference type="PRO" id="PR:Q12516"/>
<dbReference type="Proteomes" id="UP000002311">
    <property type="component" value="Chromosome IV"/>
</dbReference>
<dbReference type="RNAct" id="Q12516">
    <property type="molecule type" value="protein"/>
</dbReference>
<dbReference type="GO" id="GO:0071944">
    <property type="term" value="C:cell periphery"/>
    <property type="evidence" value="ECO:0007005"/>
    <property type="project" value="SGD"/>
</dbReference>
<dbReference type="GO" id="GO:0000324">
    <property type="term" value="C:fungal-type vacuole"/>
    <property type="evidence" value="ECO:0007005"/>
    <property type="project" value="SGD"/>
</dbReference>
<dbReference type="GO" id="GO:0016020">
    <property type="term" value="C:membrane"/>
    <property type="evidence" value="ECO:0007669"/>
    <property type="project" value="UniProtKB-SubCell"/>
</dbReference>
<dbReference type="GO" id="GO:0016042">
    <property type="term" value="P:lipid catabolic process"/>
    <property type="evidence" value="ECO:0007669"/>
    <property type="project" value="UniProtKB-KW"/>
</dbReference>
<dbReference type="InterPro" id="IPR037737">
    <property type="entry name" value="Srf1"/>
</dbReference>
<dbReference type="PANTHER" id="PTHR36819">
    <property type="entry name" value="REGULATOR OF PHOSPHOLIPASE D SRF1"/>
    <property type="match status" value="1"/>
</dbReference>
<dbReference type="PANTHER" id="PTHR36819:SF1">
    <property type="entry name" value="REGULATOR OF PHOSPHOLIPASE D SRF1"/>
    <property type="match status" value="1"/>
</dbReference>
<sequence>MGDSNSSQEAYSDTTSTNASRIADQNQLNLNVDLEKNQTVRKSGSLEALQNAKIHVPKHSDGSPLDYPKLNTYTFVPTTVPPYVLEAQFDKLRLQDKGTVDGNVTDDKNLPKEFKWGQFASTIGCHSAYTRDQNYNPSHKSYDGYSLSSSTSSKNAALREILGDMCSEWGGEERLEGVLHSEIGANLEFNTTEERKEWLQYIEKVKDFYYGDNKKNPESPESVHNKVYKSDWVNELNKEREKWRRLKQRKLQQWRPPLTSLLLDNQYLILGLRIFTGILSCISLALAIKIFQNSRSNNTISESKIGQQPSTIMAICVNAVAIAYIIYIAHDEFAGKPVGLRNPLSKLKLILLDLLFIIFSSANLALAFNTRFDKEWVCTSIRRSNGSTYGYPKIPRICRKQEALSAFLFVALFMWVITFSISIVRVVEKVSSITNRN</sequence>
<accession>Q12516</accession>
<accession>D6VRL6</accession>
<accession>P89897</accession>
<accession>Q7LGS2</accession>
<evidence type="ECO:0000255" key="1"/>
<evidence type="ECO:0000256" key="2">
    <source>
        <dbReference type="SAM" id="MobiDB-lite"/>
    </source>
</evidence>
<evidence type="ECO:0000269" key="3">
    <source>
    </source>
</evidence>
<evidence type="ECO:0000269" key="4">
    <source>
    </source>
</evidence>
<evidence type="ECO:0000305" key="5"/>
<evidence type="ECO:0007744" key="6">
    <source>
    </source>
</evidence>
<evidence type="ECO:0007744" key="7">
    <source>
    </source>
</evidence>
<evidence type="ECO:0007744" key="8">
    <source>
    </source>
</evidence>
<proteinExistence type="evidence at protein level"/>
<organism>
    <name type="scientific">Saccharomyces cerevisiae (strain ATCC 204508 / S288c)</name>
    <name type="common">Baker's yeast</name>
    <dbReference type="NCBI Taxonomy" id="559292"/>
    <lineage>
        <taxon>Eukaryota</taxon>
        <taxon>Fungi</taxon>
        <taxon>Dikarya</taxon>
        <taxon>Ascomycota</taxon>
        <taxon>Saccharomycotina</taxon>
        <taxon>Saccharomycetes</taxon>
        <taxon>Saccharomycetales</taxon>
        <taxon>Saccharomycetaceae</taxon>
        <taxon>Saccharomyces</taxon>
    </lineage>
</organism>
<protein>
    <recommendedName>
        <fullName>Regulator of phospholipase D SRF1</fullName>
    </recommendedName>
    <alternativeName>
        <fullName>SPO14 regulatory factor 1</fullName>
    </alternativeName>
</protein>
<keyword id="KW-0325">Glycoprotein</keyword>
<keyword id="KW-0442">Lipid degradation</keyword>
<keyword id="KW-0443">Lipid metabolism</keyword>
<keyword id="KW-0472">Membrane</keyword>
<keyword id="KW-0597">Phosphoprotein</keyword>
<keyword id="KW-1185">Reference proteome</keyword>
<keyword id="KW-0812">Transmembrane</keyword>
<keyword id="KW-1133">Transmembrane helix</keyword>